<sequence>MSEADARPSNFIRQIIDKDLADGKHTSVHTRFPPEPNGYLHIGHAKSICLNFGIAQDYQGQCNLRFDDTNPEKEDIEYVESIKKDVNWLGFEWDGEVCYSSNYFDKLYEYAIELINKGLAYVDELSPEQIREYRGTLKEPGKPSPYRDRSVEENLALFEKMRAGEFEEGKACLRAKIDMGSSFMVMRDPVLYRVRFATHHQTGDKWCIYPMYDFTHCISDALEGITHSICTLEFMDNRRLYDWVLDNITIDCRPHQYEFSRLNLEYTVMSKRKLNQLVTEKLVNGWDDPRMPTVSGLRRRGFTPASIREFCKRIGVTKQENMIEFSSLESCIRDDLNENAPRAMAVLDPVKVVIENFEVGAVENLTLANHPNKPEMGEREVPFTREVWIEREDFREEANKKYKRLVLGKEVRLRGAYVIKAERVEKDAEGNITTIYCTYDPETLGKNPADGRKVKGVIHWVSADKALPAEIRLYDRLFTVPNPAAAEDFASTINTDSLVVINGFVEPSLASAEAEQGYQFERMGYFCADSKDSTADNLVFNRTVGLRDTWAKIENQ</sequence>
<protein>
    <recommendedName>
        <fullName evidence="1">Glutamine--tRNA ligase</fullName>
        <ecNumber evidence="1">6.1.1.18</ecNumber>
    </recommendedName>
    <alternativeName>
        <fullName evidence="1">Glutaminyl-tRNA synthetase</fullName>
        <shortName evidence="1">GlnRS</shortName>
    </alternativeName>
</protein>
<evidence type="ECO:0000255" key="1">
    <source>
        <dbReference type="HAMAP-Rule" id="MF_00126"/>
    </source>
</evidence>
<dbReference type="EC" id="6.1.1.18" evidence="1"/>
<dbReference type="EMBL" id="BA000031">
    <property type="protein sequence ID" value="BAC59095.1"/>
    <property type="molecule type" value="Genomic_DNA"/>
</dbReference>
<dbReference type="RefSeq" id="NP_797211.1">
    <property type="nucleotide sequence ID" value="NC_004603.1"/>
</dbReference>
<dbReference type="RefSeq" id="WP_005454579.1">
    <property type="nucleotide sequence ID" value="NC_004603.1"/>
</dbReference>
<dbReference type="SMR" id="Q87RG4"/>
<dbReference type="GeneID" id="1188329"/>
<dbReference type="KEGG" id="vpa:VP0832"/>
<dbReference type="PATRIC" id="fig|223926.6.peg.788"/>
<dbReference type="eggNOG" id="COG0008">
    <property type="taxonomic scope" value="Bacteria"/>
</dbReference>
<dbReference type="HOGENOM" id="CLU_001882_2_3_6"/>
<dbReference type="Proteomes" id="UP000002493">
    <property type="component" value="Chromosome 1"/>
</dbReference>
<dbReference type="GO" id="GO:0005829">
    <property type="term" value="C:cytosol"/>
    <property type="evidence" value="ECO:0007669"/>
    <property type="project" value="TreeGrafter"/>
</dbReference>
<dbReference type="GO" id="GO:0005524">
    <property type="term" value="F:ATP binding"/>
    <property type="evidence" value="ECO:0007669"/>
    <property type="project" value="UniProtKB-UniRule"/>
</dbReference>
<dbReference type="GO" id="GO:0004819">
    <property type="term" value="F:glutamine-tRNA ligase activity"/>
    <property type="evidence" value="ECO:0007669"/>
    <property type="project" value="UniProtKB-UniRule"/>
</dbReference>
<dbReference type="GO" id="GO:0006425">
    <property type="term" value="P:glutaminyl-tRNA aminoacylation"/>
    <property type="evidence" value="ECO:0007669"/>
    <property type="project" value="InterPro"/>
</dbReference>
<dbReference type="GO" id="GO:0006424">
    <property type="term" value="P:glutamyl-tRNA aminoacylation"/>
    <property type="evidence" value="ECO:0007669"/>
    <property type="project" value="UniProtKB-UniRule"/>
</dbReference>
<dbReference type="CDD" id="cd00807">
    <property type="entry name" value="GlnRS_core"/>
    <property type="match status" value="1"/>
</dbReference>
<dbReference type="FunFam" id="1.10.1160.10:FF:000001">
    <property type="entry name" value="Glutamine--tRNA ligase"/>
    <property type="match status" value="1"/>
</dbReference>
<dbReference type="FunFam" id="2.40.240.10:FF:000001">
    <property type="entry name" value="Glutamine--tRNA ligase"/>
    <property type="match status" value="1"/>
</dbReference>
<dbReference type="FunFam" id="2.40.240.10:FF:000003">
    <property type="entry name" value="Glutamine--tRNA ligase"/>
    <property type="match status" value="1"/>
</dbReference>
<dbReference type="FunFam" id="3.90.800.10:FF:000001">
    <property type="entry name" value="Glutamine--tRNA ligase"/>
    <property type="match status" value="1"/>
</dbReference>
<dbReference type="FunFam" id="3.40.50.620:FF:000037">
    <property type="entry name" value="Glutamine--tRNA ligase cytoplasmic"/>
    <property type="match status" value="1"/>
</dbReference>
<dbReference type="Gene3D" id="1.10.1160.10">
    <property type="entry name" value="Glutamyl-trna Synthetase, Domain 2"/>
    <property type="match status" value="1"/>
</dbReference>
<dbReference type="Gene3D" id="3.90.800.10">
    <property type="entry name" value="Glutamyl-tRNA Synthetase, Domain 3"/>
    <property type="match status" value="1"/>
</dbReference>
<dbReference type="Gene3D" id="3.40.50.620">
    <property type="entry name" value="HUPs"/>
    <property type="match status" value="1"/>
</dbReference>
<dbReference type="Gene3D" id="2.40.240.10">
    <property type="entry name" value="Ribosomal Protein L25, Chain P"/>
    <property type="match status" value="2"/>
</dbReference>
<dbReference type="HAMAP" id="MF_00126">
    <property type="entry name" value="Gln_tRNA_synth"/>
    <property type="match status" value="1"/>
</dbReference>
<dbReference type="InterPro" id="IPR001412">
    <property type="entry name" value="aa-tRNA-synth_I_CS"/>
</dbReference>
<dbReference type="InterPro" id="IPR004514">
    <property type="entry name" value="Gln-tRNA-synth"/>
</dbReference>
<dbReference type="InterPro" id="IPR050132">
    <property type="entry name" value="Gln/Glu-tRNA_Ligase"/>
</dbReference>
<dbReference type="InterPro" id="IPR022861">
    <property type="entry name" value="Gln_tRNA_ligase_bac"/>
</dbReference>
<dbReference type="InterPro" id="IPR000924">
    <property type="entry name" value="Glu/Gln-tRNA-synth"/>
</dbReference>
<dbReference type="InterPro" id="IPR020058">
    <property type="entry name" value="Glu/Gln-tRNA-synth_Ib_cat-dom"/>
</dbReference>
<dbReference type="InterPro" id="IPR020059">
    <property type="entry name" value="Glu/Gln-tRNA-synth_Ib_codon-bd"/>
</dbReference>
<dbReference type="InterPro" id="IPR020061">
    <property type="entry name" value="Glu_tRNA_lig_a-bdl"/>
</dbReference>
<dbReference type="InterPro" id="IPR020056">
    <property type="entry name" value="Rbsml_bL25/Gln-tRNA_synth_N"/>
</dbReference>
<dbReference type="InterPro" id="IPR011035">
    <property type="entry name" value="Ribosomal_bL25/Gln-tRNA_synth"/>
</dbReference>
<dbReference type="InterPro" id="IPR014729">
    <property type="entry name" value="Rossmann-like_a/b/a_fold"/>
</dbReference>
<dbReference type="InterPro" id="IPR049437">
    <property type="entry name" value="tRNA-synt_1c_C2"/>
</dbReference>
<dbReference type="NCBIfam" id="TIGR00440">
    <property type="entry name" value="glnS"/>
    <property type="match status" value="1"/>
</dbReference>
<dbReference type="NCBIfam" id="NF011291">
    <property type="entry name" value="PRK14703.1"/>
    <property type="match status" value="1"/>
</dbReference>
<dbReference type="PANTHER" id="PTHR43097:SF5">
    <property type="entry name" value="GLUTAMATE--TRNA LIGASE"/>
    <property type="match status" value="1"/>
</dbReference>
<dbReference type="PANTHER" id="PTHR43097">
    <property type="entry name" value="GLUTAMINE-TRNA LIGASE"/>
    <property type="match status" value="1"/>
</dbReference>
<dbReference type="Pfam" id="PF00749">
    <property type="entry name" value="tRNA-synt_1c"/>
    <property type="match status" value="1"/>
</dbReference>
<dbReference type="Pfam" id="PF03950">
    <property type="entry name" value="tRNA-synt_1c_C"/>
    <property type="match status" value="1"/>
</dbReference>
<dbReference type="Pfam" id="PF20974">
    <property type="entry name" value="tRNA-synt_1c_C2"/>
    <property type="match status" value="1"/>
</dbReference>
<dbReference type="PRINTS" id="PR00987">
    <property type="entry name" value="TRNASYNTHGLU"/>
</dbReference>
<dbReference type="SUPFAM" id="SSF52374">
    <property type="entry name" value="Nucleotidylyl transferase"/>
    <property type="match status" value="1"/>
</dbReference>
<dbReference type="SUPFAM" id="SSF50715">
    <property type="entry name" value="Ribosomal protein L25-like"/>
    <property type="match status" value="1"/>
</dbReference>
<dbReference type="PROSITE" id="PS00178">
    <property type="entry name" value="AA_TRNA_LIGASE_I"/>
    <property type="match status" value="1"/>
</dbReference>
<name>SYQ_VIBPA</name>
<reference key="1">
    <citation type="journal article" date="2003" name="Lancet">
        <title>Genome sequence of Vibrio parahaemolyticus: a pathogenic mechanism distinct from that of V. cholerae.</title>
        <authorList>
            <person name="Makino K."/>
            <person name="Oshima K."/>
            <person name="Kurokawa K."/>
            <person name="Yokoyama K."/>
            <person name="Uda T."/>
            <person name="Tagomori K."/>
            <person name="Iijima Y."/>
            <person name="Najima M."/>
            <person name="Nakano M."/>
            <person name="Yamashita A."/>
            <person name="Kubota Y."/>
            <person name="Kimura S."/>
            <person name="Yasunaga T."/>
            <person name="Honda T."/>
            <person name="Shinagawa H."/>
            <person name="Hattori M."/>
            <person name="Iida T."/>
        </authorList>
    </citation>
    <scope>NUCLEOTIDE SEQUENCE [LARGE SCALE GENOMIC DNA]</scope>
    <source>
        <strain>RIMD 2210633</strain>
    </source>
</reference>
<proteinExistence type="inferred from homology"/>
<accession>Q87RG4</accession>
<feature type="chain" id="PRO_0000195853" description="Glutamine--tRNA ligase">
    <location>
        <begin position="1"/>
        <end position="556"/>
    </location>
</feature>
<feature type="short sequence motif" description="'HIGH' region" evidence="1">
    <location>
        <begin position="34"/>
        <end position="44"/>
    </location>
</feature>
<feature type="short sequence motif" description="'KMSKS' region" evidence="1">
    <location>
        <begin position="268"/>
        <end position="272"/>
    </location>
</feature>
<feature type="binding site" evidence="1">
    <location>
        <begin position="35"/>
        <end position="37"/>
    </location>
    <ligand>
        <name>ATP</name>
        <dbReference type="ChEBI" id="CHEBI:30616"/>
    </ligand>
</feature>
<feature type="binding site" evidence="1">
    <location>
        <begin position="41"/>
        <end position="47"/>
    </location>
    <ligand>
        <name>ATP</name>
        <dbReference type="ChEBI" id="CHEBI:30616"/>
    </ligand>
</feature>
<feature type="binding site" evidence="1">
    <location>
        <position position="67"/>
    </location>
    <ligand>
        <name>L-glutamine</name>
        <dbReference type="ChEBI" id="CHEBI:58359"/>
    </ligand>
</feature>
<feature type="binding site" evidence="1">
    <location>
        <position position="212"/>
    </location>
    <ligand>
        <name>L-glutamine</name>
        <dbReference type="ChEBI" id="CHEBI:58359"/>
    </ligand>
</feature>
<feature type="binding site" evidence="1">
    <location>
        <position position="231"/>
    </location>
    <ligand>
        <name>ATP</name>
        <dbReference type="ChEBI" id="CHEBI:30616"/>
    </ligand>
</feature>
<feature type="binding site" evidence="1">
    <location>
        <begin position="261"/>
        <end position="262"/>
    </location>
    <ligand>
        <name>ATP</name>
        <dbReference type="ChEBI" id="CHEBI:30616"/>
    </ligand>
</feature>
<feature type="binding site" evidence="1">
    <location>
        <begin position="269"/>
        <end position="271"/>
    </location>
    <ligand>
        <name>ATP</name>
        <dbReference type="ChEBI" id="CHEBI:30616"/>
    </ligand>
</feature>
<keyword id="KW-0030">Aminoacyl-tRNA synthetase</keyword>
<keyword id="KW-0067">ATP-binding</keyword>
<keyword id="KW-0963">Cytoplasm</keyword>
<keyword id="KW-0436">Ligase</keyword>
<keyword id="KW-0547">Nucleotide-binding</keyword>
<keyword id="KW-0648">Protein biosynthesis</keyword>
<gene>
    <name evidence="1" type="primary">glnS</name>
    <name type="ordered locus">VP0832</name>
</gene>
<organism>
    <name type="scientific">Vibrio parahaemolyticus serotype O3:K6 (strain RIMD 2210633)</name>
    <dbReference type="NCBI Taxonomy" id="223926"/>
    <lineage>
        <taxon>Bacteria</taxon>
        <taxon>Pseudomonadati</taxon>
        <taxon>Pseudomonadota</taxon>
        <taxon>Gammaproteobacteria</taxon>
        <taxon>Vibrionales</taxon>
        <taxon>Vibrionaceae</taxon>
        <taxon>Vibrio</taxon>
    </lineage>
</organism>
<comment type="catalytic activity">
    <reaction evidence="1">
        <text>tRNA(Gln) + L-glutamine + ATP = L-glutaminyl-tRNA(Gln) + AMP + diphosphate</text>
        <dbReference type="Rhea" id="RHEA:20121"/>
        <dbReference type="Rhea" id="RHEA-COMP:9662"/>
        <dbReference type="Rhea" id="RHEA-COMP:9681"/>
        <dbReference type="ChEBI" id="CHEBI:30616"/>
        <dbReference type="ChEBI" id="CHEBI:33019"/>
        <dbReference type="ChEBI" id="CHEBI:58359"/>
        <dbReference type="ChEBI" id="CHEBI:78442"/>
        <dbReference type="ChEBI" id="CHEBI:78521"/>
        <dbReference type="ChEBI" id="CHEBI:456215"/>
        <dbReference type="EC" id="6.1.1.18"/>
    </reaction>
</comment>
<comment type="subunit">
    <text evidence="1">Monomer.</text>
</comment>
<comment type="subcellular location">
    <subcellularLocation>
        <location evidence="1">Cytoplasm</location>
    </subcellularLocation>
</comment>
<comment type="similarity">
    <text evidence="1">Belongs to the class-I aminoacyl-tRNA synthetase family.</text>
</comment>